<organism>
    <name type="scientific">Oryza sativa subsp. japonica</name>
    <name type="common">Rice</name>
    <dbReference type="NCBI Taxonomy" id="39947"/>
    <lineage>
        <taxon>Eukaryota</taxon>
        <taxon>Viridiplantae</taxon>
        <taxon>Streptophyta</taxon>
        <taxon>Embryophyta</taxon>
        <taxon>Tracheophyta</taxon>
        <taxon>Spermatophyta</taxon>
        <taxon>Magnoliopsida</taxon>
        <taxon>Liliopsida</taxon>
        <taxon>Poales</taxon>
        <taxon>Poaceae</taxon>
        <taxon>BOP clade</taxon>
        <taxon>Oryzoideae</taxon>
        <taxon>Oryzeae</taxon>
        <taxon>Oryzinae</taxon>
        <taxon>Oryza</taxon>
        <taxon>Oryza sativa</taxon>
    </lineage>
</organism>
<comment type="allergen">
    <text evidence="1">Causes an allergic reaction in human. Causes grass pollen allergy. Binds to IgE.</text>
</comment>
<comment type="similarity">
    <text evidence="2">Belongs to the expansin family. Expansin B subfamily.</text>
</comment>
<name>MPAO2_ORYSJ</name>
<gene>
    <name type="ordered locus">Os06g0662900</name>
    <name type="ordered locus">LOC_Os06g45230</name>
</gene>
<reference key="1">
    <citation type="submission" date="2002-09" db="UniProtKB">
        <authorList>
            <person name="Kerim T."/>
            <person name="Imin N."/>
            <person name="Weinman J.J."/>
            <person name="Rolfe B.G."/>
        </authorList>
    </citation>
    <scope>PROTEIN SEQUENCE</scope>
    <scope>ALLERGEN</scope>
    <source>
        <tissue>Pollen</tissue>
    </source>
</reference>
<reference key="2">
    <citation type="journal article" date="2005" name="Nature">
        <title>The map-based sequence of the rice genome.</title>
        <authorList>
            <consortium name="International rice genome sequencing project (IRGSP)"/>
        </authorList>
    </citation>
    <scope>NUCLEOTIDE SEQUENCE [LARGE SCALE GENOMIC DNA]</scope>
    <source>
        <strain>cv. Nipponbare</strain>
    </source>
</reference>
<reference key="3">
    <citation type="journal article" date="2008" name="Nucleic Acids Res.">
        <title>The rice annotation project database (RAP-DB): 2008 update.</title>
        <authorList>
            <consortium name="The rice annotation project (RAP)"/>
        </authorList>
    </citation>
    <scope>GENOME REANNOTATION</scope>
    <source>
        <strain>cv. Nipponbare</strain>
    </source>
</reference>
<reference key="4">
    <citation type="journal article" date="2013" name="Rice">
        <title>Improvement of the Oryza sativa Nipponbare reference genome using next generation sequence and optical map data.</title>
        <authorList>
            <person name="Kawahara Y."/>
            <person name="de la Bastide M."/>
            <person name="Hamilton J.P."/>
            <person name="Kanamori H."/>
            <person name="McCombie W.R."/>
            <person name="Ouyang S."/>
            <person name="Schwartz D.C."/>
            <person name="Tanaka T."/>
            <person name="Wu J."/>
            <person name="Zhou S."/>
            <person name="Childs K.L."/>
            <person name="Davidson R.M."/>
            <person name="Lin H."/>
            <person name="Quesada-Ocampo L."/>
            <person name="Vaillancourt B."/>
            <person name="Sakai H."/>
            <person name="Lee S.S."/>
            <person name="Kim J."/>
            <person name="Numa H."/>
            <person name="Itoh T."/>
            <person name="Buell C.R."/>
            <person name="Matsumoto T."/>
        </authorList>
    </citation>
    <scope>GENOME REANNOTATION</scope>
    <source>
        <strain>cv. Nipponbare</strain>
    </source>
</reference>
<proteinExistence type="evidence at protein level"/>
<protein>
    <recommendedName>
        <fullName>Pollen allergen Ory s 2-A</fullName>
    </recommendedName>
    <allergenName>Ory s 2-A</allergenName>
</protein>
<accession>P83466</accession>
<dbReference type="EMBL" id="AP008212">
    <property type="status" value="NOT_ANNOTATED_CDS"/>
    <property type="molecule type" value="Genomic_DNA"/>
</dbReference>
<dbReference type="EMBL" id="AP014962">
    <property type="status" value="NOT_ANNOTATED_CDS"/>
    <property type="molecule type" value="Genomic_DNA"/>
</dbReference>
<dbReference type="PaxDb" id="39947-P83466"/>
<dbReference type="InParanoid" id="P83466"/>
<dbReference type="Proteomes" id="UP000000763">
    <property type="component" value="Chromosome 6"/>
</dbReference>
<dbReference type="Proteomes" id="UP000059680">
    <property type="component" value="Chromosome 6"/>
</dbReference>
<evidence type="ECO:0000269" key="1">
    <source ref="1"/>
</evidence>
<evidence type="ECO:0000305" key="2"/>
<feature type="chain" id="PRO_0000154574" description="Pollen allergen Ory s 2-A">
    <location>
        <begin position="1"/>
        <end position="15" status="greater than"/>
    </location>
</feature>
<feature type="non-terminal residue">
    <location>
        <position position="15"/>
    </location>
</feature>
<keyword id="KW-0020">Allergen</keyword>
<keyword id="KW-0903">Direct protein sequencing</keyword>
<keyword id="KW-1185">Reference proteome</keyword>
<sequence>TEVTFKVGEGSSGKS</sequence>